<reference key="1">
    <citation type="journal article" date="2011" name="J. Bacteriol.">
        <title>Complete genome sequence and updated annotation of Desulfovibrio alaskensis G20.</title>
        <authorList>
            <person name="Hauser L.J."/>
            <person name="Land M.L."/>
            <person name="Brown S.D."/>
            <person name="Larimer F."/>
            <person name="Keller K.L."/>
            <person name="Rapp-Giles B.J."/>
            <person name="Price M.N."/>
            <person name="Lin M."/>
            <person name="Bruce D.C."/>
            <person name="Detter J.C."/>
            <person name="Tapia R."/>
            <person name="Han C.S."/>
            <person name="Goodwin L.A."/>
            <person name="Cheng J.F."/>
            <person name="Pitluck S."/>
            <person name="Copeland A."/>
            <person name="Lucas S."/>
            <person name="Nolan M."/>
            <person name="Lapidus A.L."/>
            <person name="Palumbo A.V."/>
            <person name="Wall J.D."/>
        </authorList>
    </citation>
    <scope>NUCLEOTIDE SEQUENCE [LARGE SCALE GENOMIC DNA]</scope>
    <source>
        <strain>ATCC BAA-1058 / DSM 17464 / G20</strain>
    </source>
</reference>
<keyword id="KW-0067">ATP-binding</keyword>
<keyword id="KW-0963">Cytoplasm</keyword>
<keyword id="KW-0227">DNA damage</keyword>
<keyword id="KW-0233">DNA recombination</keyword>
<keyword id="KW-0234">DNA repair</keyword>
<keyword id="KW-0238">DNA-binding</keyword>
<keyword id="KW-0378">Hydrolase</keyword>
<keyword id="KW-0547">Nucleotide-binding</keyword>
<keyword id="KW-1185">Reference proteome</keyword>
<gene>
    <name evidence="1" type="primary">ruvB</name>
    <name type="ordered locus">Dde_2322</name>
</gene>
<proteinExistence type="inferred from homology"/>
<accession>Q30YX7</accession>
<organism>
    <name type="scientific">Oleidesulfovibrio alaskensis (strain ATCC BAA-1058 / DSM 17464 / G20)</name>
    <name type="common">Desulfovibrio alaskensis</name>
    <dbReference type="NCBI Taxonomy" id="207559"/>
    <lineage>
        <taxon>Bacteria</taxon>
        <taxon>Pseudomonadati</taxon>
        <taxon>Thermodesulfobacteriota</taxon>
        <taxon>Desulfovibrionia</taxon>
        <taxon>Desulfovibrionales</taxon>
        <taxon>Desulfovibrionaceae</taxon>
        <taxon>Oleidesulfovibrio</taxon>
    </lineage>
</organism>
<sequence>MMMEQECVDDSIRPRTLDDFIGQEDLRANLRVYLQAARGRGQAMDHTLFYGNPGLGKTTLAQIMASEMGVNMVCTSGPVLERSGDLAAILTNLGKGDLLFVDEIHRMPVAVEEVLYPAMEDFKLDLVIGQGPGARTVKIDLEPFTLVGATTRIGLLSSPLRDRFGIISRLEFYTPAELACIVKRTAGIMGVSLTEDGAVEIGRRSRGTPRIANRLLRRVRDFASVQNSAAVTAALASDALARMDVDELGLDQMDRKLLSVLIEHFAGGPVGVKTLAVACSEEVRTIEDIYEPYLIQCGFLKRTPRGRMATAKAYRHMNLLA</sequence>
<dbReference type="EC" id="3.6.4.-" evidence="1"/>
<dbReference type="EMBL" id="CP000112">
    <property type="protein sequence ID" value="ABB39119.1"/>
    <property type="molecule type" value="Genomic_DNA"/>
</dbReference>
<dbReference type="SMR" id="Q30YX7"/>
<dbReference type="STRING" id="207559.Dde_2322"/>
<dbReference type="KEGG" id="dde:Dde_2322"/>
<dbReference type="eggNOG" id="COG2255">
    <property type="taxonomic scope" value="Bacteria"/>
</dbReference>
<dbReference type="HOGENOM" id="CLU_055599_1_0_7"/>
<dbReference type="Proteomes" id="UP000002710">
    <property type="component" value="Chromosome"/>
</dbReference>
<dbReference type="GO" id="GO:0005737">
    <property type="term" value="C:cytoplasm"/>
    <property type="evidence" value="ECO:0007669"/>
    <property type="project" value="UniProtKB-SubCell"/>
</dbReference>
<dbReference type="GO" id="GO:0048476">
    <property type="term" value="C:Holliday junction resolvase complex"/>
    <property type="evidence" value="ECO:0007669"/>
    <property type="project" value="UniProtKB-UniRule"/>
</dbReference>
<dbReference type="GO" id="GO:0005524">
    <property type="term" value="F:ATP binding"/>
    <property type="evidence" value="ECO:0007669"/>
    <property type="project" value="UniProtKB-UniRule"/>
</dbReference>
<dbReference type="GO" id="GO:0016887">
    <property type="term" value="F:ATP hydrolysis activity"/>
    <property type="evidence" value="ECO:0007669"/>
    <property type="project" value="InterPro"/>
</dbReference>
<dbReference type="GO" id="GO:0000400">
    <property type="term" value="F:four-way junction DNA binding"/>
    <property type="evidence" value="ECO:0007669"/>
    <property type="project" value="UniProtKB-UniRule"/>
</dbReference>
<dbReference type="GO" id="GO:0009378">
    <property type="term" value="F:four-way junction helicase activity"/>
    <property type="evidence" value="ECO:0007669"/>
    <property type="project" value="InterPro"/>
</dbReference>
<dbReference type="GO" id="GO:0006310">
    <property type="term" value="P:DNA recombination"/>
    <property type="evidence" value="ECO:0007669"/>
    <property type="project" value="UniProtKB-UniRule"/>
</dbReference>
<dbReference type="GO" id="GO:0006281">
    <property type="term" value="P:DNA repair"/>
    <property type="evidence" value="ECO:0007669"/>
    <property type="project" value="UniProtKB-UniRule"/>
</dbReference>
<dbReference type="CDD" id="cd00009">
    <property type="entry name" value="AAA"/>
    <property type="match status" value="1"/>
</dbReference>
<dbReference type="Gene3D" id="1.10.8.60">
    <property type="match status" value="1"/>
</dbReference>
<dbReference type="Gene3D" id="3.40.50.300">
    <property type="entry name" value="P-loop containing nucleotide triphosphate hydrolases"/>
    <property type="match status" value="1"/>
</dbReference>
<dbReference type="Gene3D" id="1.10.10.10">
    <property type="entry name" value="Winged helix-like DNA-binding domain superfamily/Winged helix DNA-binding domain"/>
    <property type="match status" value="1"/>
</dbReference>
<dbReference type="HAMAP" id="MF_00016">
    <property type="entry name" value="DNA_HJ_migration_RuvB"/>
    <property type="match status" value="1"/>
</dbReference>
<dbReference type="InterPro" id="IPR003593">
    <property type="entry name" value="AAA+_ATPase"/>
</dbReference>
<dbReference type="InterPro" id="IPR041445">
    <property type="entry name" value="AAA_lid_4"/>
</dbReference>
<dbReference type="InterPro" id="IPR004605">
    <property type="entry name" value="DNA_helicase_Holl-junc_RuvB"/>
</dbReference>
<dbReference type="InterPro" id="IPR027417">
    <property type="entry name" value="P-loop_NTPase"/>
</dbReference>
<dbReference type="InterPro" id="IPR008824">
    <property type="entry name" value="RuvB-like_N"/>
</dbReference>
<dbReference type="InterPro" id="IPR008823">
    <property type="entry name" value="RuvB_C"/>
</dbReference>
<dbReference type="InterPro" id="IPR036388">
    <property type="entry name" value="WH-like_DNA-bd_sf"/>
</dbReference>
<dbReference type="InterPro" id="IPR036390">
    <property type="entry name" value="WH_DNA-bd_sf"/>
</dbReference>
<dbReference type="NCBIfam" id="NF000868">
    <property type="entry name" value="PRK00080.1"/>
    <property type="match status" value="1"/>
</dbReference>
<dbReference type="NCBIfam" id="TIGR00635">
    <property type="entry name" value="ruvB"/>
    <property type="match status" value="1"/>
</dbReference>
<dbReference type="PANTHER" id="PTHR42848">
    <property type="match status" value="1"/>
</dbReference>
<dbReference type="PANTHER" id="PTHR42848:SF1">
    <property type="entry name" value="HOLLIDAY JUNCTION BRANCH MIGRATION COMPLEX SUBUNIT RUVB"/>
    <property type="match status" value="1"/>
</dbReference>
<dbReference type="Pfam" id="PF17864">
    <property type="entry name" value="AAA_lid_4"/>
    <property type="match status" value="1"/>
</dbReference>
<dbReference type="Pfam" id="PF05491">
    <property type="entry name" value="RuvB_C"/>
    <property type="match status" value="1"/>
</dbReference>
<dbReference type="Pfam" id="PF05496">
    <property type="entry name" value="RuvB_N"/>
    <property type="match status" value="1"/>
</dbReference>
<dbReference type="SMART" id="SM00382">
    <property type="entry name" value="AAA"/>
    <property type="match status" value="1"/>
</dbReference>
<dbReference type="SUPFAM" id="SSF52540">
    <property type="entry name" value="P-loop containing nucleoside triphosphate hydrolases"/>
    <property type="match status" value="1"/>
</dbReference>
<dbReference type="SUPFAM" id="SSF46785">
    <property type="entry name" value="Winged helix' DNA-binding domain"/>
    <property type="match status" value="1"/>
</dbReference>
<evidence type="ECO:0000255" key="1">
    <source>
        <dbReference type="HAMAP-Rule" id="MF_00016"/>
    </source>
</evidence>
<name>RUVB_OLEA2</name>
<feature type="chain" id="PRO_0000235365" description="Holliday junction branch migration complex subunit RuvB">
    <location>
        <begin position="1"/>
        <end position="321"/>
    </location>
</feature>
<feature type="region of interest" description="Large ATPase domain (RuvB-L)" evidence="1">
    <location>
        <begin position="1"/>
        <end position="173"/>
    </location>
</feature>
<feature type="region of interest" description="Small ATPAse domain (RuvB-S)" evidence="1">
    <location>
        <begin position="174"/>
        <end position="244"/>
    </location>
</feature>
<feature type="region of interest" description="Head domain (RuvB-H)" evidence="1">
    <location>
        <begin position="247"/>
        <end position="321"/>
    </location>
</feature>
<feature type="binding site" evidence="1">
    <location>
        <position position="12"/>
    </location>
    <ligand>
        <name>ATP</name>
        <dbReference type="ChEBI" id="CHEBI:30616"/>
    </ligand>
</feature>
<feature type="binding site" evidence="1">
    <location>
        <position position="13"/>
    </location>
    <ligand>
        <name>ATP</name>
        <dbReference type="ChEBI" id="CHEBI:30616"/>
    </ligand>
</feature>
<feature type="binding site" evidence="1">
    <location>
        <position position="54"/>
    </location>
    <ligand>
        <name>ATP</name>
        <dbReference type="ChEBI" id="CHEBI:30616"/>
    </ligand>
</feature>
<feature type="binding site" evidence="1">
    <location>
        <position position="57"/>
    </location>
    <ligand>
        <name>ATP</name>
        <dbReference type="ChEBI" id="CHEBI:30616"/>
    </ligand>
</feature>
<feature type="binding site" evidence="1">
    <location>
        <position position="58"/>
    </location>
    <ligand>
        <name>ATP</name>
        <dbReference type="ChEBI" id="CHEBI:30616"/>
    </ligand>
</feature>
<feature type="binding site" evidence="1">
    <location>
        <position position="58"/>
    </location>
    <ligand>
        <name>Mg(2+)</name>
        <dbReference type="ChEBI" id="CHEBI:18420"/>
    </ligand>
</feature>
<feature type="binding site" evidence="1">
    <location>
        <position position="59"/>
    </location>
    <ligand>
        <name>ATP</name>
        <dbReference type="ChEBI" id="CHEBI:30616"/>
    </ligand>
</feature>
<feature type="binding site" evidence="1">
    <location>
        <begin position="120"/>
        <end position="122"/>
    </location>
    <ligand>
        <name>ATP</name>
        <dbReference type="ChEBI" id="CHEBI:30616"/>
    </ligand>
</feature>
<feature type="binding site" evidence="1">
    <location>
        <position position="163"/>
    </location>
    <ligand>
        <name>ATP</name>
        <dbReference type="ChEBI" id="CHEBI:30616"/>
    </ligand>
</feature>
<feature type="binding site" evidence="1">
    <location>
        <position position="173"/>
    </location>
    <ligand>
        <name>ATP</name>
        <dbReference type="ChEBI" id="CHEBI:30616"/>
    </ligand>
</feature>
<feature type="binding site" evidence="1">
    <location>
        <position position="210"/>
    </location>
    <ligand>
        <name>ATP</name>
        <dbReference type="ChEBI" id="CHEBI:30616"/>
    </ligand>
</feature>
<feature type="binding site" evidence="1">
    <location>
        <position position="302"/>
    </location>
    <ligand>
        <name>DNA</name>
        <dbReference type="ChEBI" id="CHEBI:16991"/>
    </ligand>
</feature>
<feature type="binding site" evidence="1">
    <location>
        <position position="307"/>
    </location>
    <ligand>
        <name>DNA</name>
        <dbReference type="ChEBI" id="CHEBI:16991"/>
    </ligand>
</feature>
<protein>
    <recommendedName>
        <fullName evidence="1">Holliday junction branch migration complex subunit RuvB</fullName>
        <ecNumber evidence="1">3.6.4.-</ecNumber>
    </recommendedName>
</protein>
<comment type="function">
    <text evidence="1">The RuvA-RuvB-RuvC complex processes Holliday junction (HJ) DNA during genetic recombination and DNA repair, while the RuvA-RuvB complex plays an important role in the rescue of blocked DNA replication forks via replication fork reversal (RFR). RuvA specifically binds to HJ cruciform DNA, conferring on it an open structure. The RuvB hexamer acts as an ATP-dependent pump, pulling dsDNA into and through the RuvAB complex. RuvB forms 2 homohexamers on either side of HJ DNA bound by 1 or 2 RuvA tetramers; 4 subunits per hexamer contact DNA at a time. Coordinated motions by a converter formed by DNA-disengaged RuvB subunits stimulates ATP hydrolysis and nucleotide exchange. Immobilization of the converter enables RuvB to convert the ATP-contained energy into a lever motion, pulling 2 nucleotides of DNA out of the RuvA tetramer per ATP hydrolyzed, thus driving DNA branch migration. The RuvB motors rotate together with the DNA substrate, which together with the progressing nucleotide cycle form the mechanistic basis for DNA recombination by continuous HJ branch migration. Branch migration allows RuvC to scan DNA until it finds its consensus sequence, where it cleaves and resolves cruciform DNA.</text>
</comment>
<comment type="catalytic activity">
    <reaction evidence="1">
        <text>ATP + H2O = ADP + phosphate + H(+)</text>
        <dbReference type="Rhea" id="RHEA:13065"/>
        <dbReference type="ChEBI" id="CHEBI:15377"/>
        <dbReference type="ChEBI" id="CHEBI:15378"/>
        <dbReference type="ChEBI" id="CHEBI:30616"/>
        <dbReference type="ChEBI" id="CHEBI:43474"/>
        <dbReference type="ChEBI" id="CHEBI:456216"/>
    </reaction>
</comment>
<comment type="subunit">
    <text evidence="1">Homohexamer. Forms an RuvA(8)-RuvB(12)-Holliday junction (HJ) complex. HJ DNA is sandwiched between 2 RuvA tetramers; dsDNA enters through RuvA and exits via RuvB. An RuvB hexamer assembles on each DNA strand where it exits the tetramer. Each RuvB hexamer is contacted by two RuvA subunits (via domain III) on 2 adjacent RuvB subunits; this complex drives branch migration. In the full resolvosome a probable DNA-RuvA(4)-RuvB(12)-RuvC(2) complex forms which resolves the HJ.</text>
</comment>
<comment type="subcellular location">
    <subcellularLocation>
        <location evidence="1">Cytoplasm</location>
    </subcellularLocation>
</comment>
<comment type="domain">
    <text evidence="1">Has 3 domains, the large (RuvB-L) and small ATPase (RuvB-S) domains and the C-terminal head (RuvB-H) domain. The head domain binds DNA, while the ATPase domains jointly bind ATP, ADP or are empty depending on the state of the subunit in the translocation cycle. During a single DNA translocation step the structure of each domain remains the same, but their relative positions change.</text>
</comment>
<comment type="similarity">
    <text evidence="1">Belongs to the RuvB family.</text>
</comment>